<organism>
    <name type="scientific">Thermococcus kodakarensis (strain ATCC BAA-918 / JCM 12380 / KOD1)</name>
    <name type="common">Pyrococcus kodakaraensis (strain KOD1)</name>
    <dbReference type="NCBI Taxonomy" id="69014"/>
    <lineage>
        <taxon>Archaea</taxon>
        <taxon>Methanobacteriati</taxon>
        <taxon>Methanobacteriota</taxon>
        <taxon>Thermococci</taxon>
        <taxon>Thermococcales</taxon>
        <taxon>Thermococcaceae</taxon>
        <taxon>Thermococcus</taxon>
    </lineage>
</organism>
<evidence type="ECO:0000255" key="1">
    <source>
        <dbReference type="HAMAP-Rule" id="MF_01475"/>
    </source>
</evidence>
<evidence type="ECO:0000256" key="2">
    <source>
        <dbReference type="SAM" id="MobiDB-lite"/>
    </source>
</evidence>
<evidence type="ECO:0000269" key="3">
    <source>
    </source>
</evidence>
<evidence type="ECO:0000312" key="4">
    <source>
        <dbReference type="EMBL" id="BAD85712.1"/>
    </source>
</evidence>
<evidence type="ECO:0007744" key="5">
    <source>
        <dbReference type="PDB" id="6SKF"/>
    </source>
</evidence>
<evidence type="ECO:0007744" key="6">
    <source>
        <dbReference type="PDB" id="6SKG"/>
    </source>
</evidence>
<evidence type="ECO:0007744" key="7">
    <source>
        <dbReference type="PDB" id="6TH6"/>
    </source>
</evidence>
<keyword id="KW-0002">3D-structure</keyword>
<keyword id="KW-1185">Reference proteome</keyword>
<keyword id="KW-0687">Ribonucleoprotein</keyword>
<keyword id="KW-0689">Ribosomal protein</keyword>
<keyword id="KW-0694">RNA-binding</keyword>
<keyword id="KW-0699">rRNA-binding</keyword>
<accession>Q5JJG6</accession>
<protein>
    <recommendedName>
        <fullName evidence="1">Large ribosomal subunit protein eL19</fullName>
    </recommendedName>
</protein>
<sequence length="150" mass="17620">MIMLKTQRRIAAELLKCGENRIWIDPERIEDVAAAITREDIKRLIHDGVIKKKPIKGQSRARARAFQEARKKGRHRGPGSKKGKKTARMGKKEVWMMTIRALRKELRKLKAEGKLDAHTYRRLYIRAKGGQFKNKRQLYMFMQEHGILKE</sequence>
<proteinExistence type="evidence at protein level"/>
<reference evidence="4" key="1">
    <citation type="journal article" date="2005" name="Genome Res.">
        <title>Complete genome sequence of the hyperthermophilic archaeon Thermococcus kodakaraensis KOD1 and comparison with Pyrococcus genomes.</title>
        <authorList>
            <person name="Fukui T."/>
            <person name="Atomi H."/>
            <person name="Kanai T."/>
            <person name="Matsumi R."/>
            <person name="Fujiwara S."/>
            <person name="Imanaka T."/>
        </authorList>
    </citation>
    <scope>NUCLEOTIDE SEQUENCE [LARGE SCALE GENOMIC DNA]</scope>
    <source>
        <strain>ATCC BAA-918 / JCM 12380 / KOD1</strain>
    </source>
</reference>
<reference evidence="5 6 7" key="2">
    <citation type="journal article" date="2020" name="Nature">
        <title>Dynamic RNA acetylation revealed by quantitative cross-evolutionary mapping.</title>
        <authorList>
            <person name="Sas-Chen A."/>
            <person name="Thomas J.M."/>
            <person name="Matzov D."/>
            <person name="Taoka M."/>
            <person name="Nance K.D."/>
            <person name="Nir R."/>
            <person name="Bryson K.M."/>
            <person name="Shachar R."/>
            <person name="Liman G.L.S."/>
            <person name="Burkhart B.W."/>
            <person name="Gamage S.T."/>
            <person name="Nobe Y."/>
            <person name="Briney C.A."/>
            <person name="Levy M.J."/>
            <person name="Fuchs R.T."/>
            <person name="Robb G.B."/>
            <person name="Hartmann J."/>
            <person name="Sharma S."/>
            <person name="Lin Q."/>
            <person name="Florens L."/>
            <person name="Washburn M.P."/>
            <person name="Isobe T."/>
            <person name="Santangelo T.J."/>
            <person name="Shalev-Benami M."/>
            <person name="Meier J.L."/>
            <person name="Schwartz S."/>
        </authorList>
    </citation>
    <scope>STRUCTURE BY ELECTRON MICROSCOPY (2.55 ANGSTROMS) IN 70S RIBOSOME</scope>
    <scope>SUBUNIT</scope>
    <source>
        <strain>ATCC BAA-918 / TS559</strain>
    </source>
</reference>
<dbReference type="EMBL" id="AP006878">
    <property type="protein sequence ID" value="BAD85712.1"/>
    <property type="molecule type" value="Genomic_DNA"/>
</dbReference>
<dbReference type="RefSeq" id="WP_011250474.1">
    <property type="nucleotide sequence ID" value="NC_006624.1"/>
</dbReference>
<dbReference type="PDB" id="6SKF">
    <property type="method" value="EM"/>
    <property type="resolution" value="2.95 A"/>
    <property type="chains" value="BS=1-150"/>
</dbReference>
<dbReference type="PDB" id="6SKG">
    <property type="method" value="EM"/>
    <property type="resolution" value="2.65 A"/>
    <property type="chains" value="BS=1-150"/>
</dbReference>
<dbReference type="PDB" id="6TH6">
    <property type="method" value="EM"/>
    <property type="resolution" value="2.55 A"/>
    <property type="chains" value="BS=1-150"/>
</dbReference>
<dbReference type="PDBsum" id="6SKF"/>
<dbReference type="PDBsum" id="6SKG"/>
<dbReference type="PDBsum" id="6TH6"/>
<dbReference type="EMDB" id="EMD-10223"/>
<dbReference type="EMDB" id="EMD-10224"/>
<dbReference type="EMDB" id="EMD-10503"/>
<dbReference type="FunCoup" id="Q5JJG6">
    <property type="interactions" value="161"/>
</dbReference>
<dbReference type="STRING" id="69014.TK1523"/>
<dbReference type="EnsemblBacteria" id="BAD85712">
    <property type="protein sequence ID" value="BAD85712"/>
    <property type="gene ID" value="TK1523"/>
</dbReference>
<dbReference type="GeneID" id="3233876"/>
<dbReference type="KEGG" id="tko:TK1523"/>
<dbReference type="PATRIC" id="fig|69014.16.peg.1483"/>
<dbReference type="eggNOG" id="arCOG04089">
    <property type="taxonomic scope" value="Archaea"/>
</dbReference>
<dbReference type="HOGENOM" id="CLU_083919_1_1_2"/>
<dbReference type="InParanoid" id="Q5JJG6"/>
<dbReference type="PhylomeDB" id="Q5JJG6"/>
<dbReference type="Proteomes" id="UP000000536">
    <property type="component" value="Chromosome"/>
</dbReference>
<dbReference type="GO" id="GO:0022625">
    <property type="term" value="C:cytosolic large ribosomal subunit"/>
    <property type="evidence" value="ECO:0000318"/>
    <property type="project" value="GO_Central"/>
</dbReference>
<dbReference type="GO" id="GO:0070180">
    <property type="term" value="F:large ribosomal subunit rRNA binding"/>
    <property type="evidence" value="ECO:0007669"/>
    <property type="project" value="UniProtKB-UniRule"/>
</dbReference>
<dbReference type="GO" id="GO:0003723">
    <property type="term" value="F:RNA binding"/>
    <property type="evidence" value="ECO:0000318"/>
    <property type="project" value="GO_Central"/>
</dbReference>
<dbReference type="GO" id="GO:0003735">
    <property type="term" value="F:structural constituent of ribosome"/>
    <property type="evidence" value="ECO:0000318"/>
    <property type="project" value="GO_Central"/>
</dbReference>
<dbReference type="GO" id="GO:0006412">
    <property type="term" value="P:translation"/>
    <property type="evidence" value="ECO:0007669"/>
    <property type="project" value="UniProtKB-UniRule"/>
</dbReference>
<dbReference type="CDD" id="cd00481">
    <property type="entry name" value="Ribosomal_L19e"/>
    <property type="match status" value="1"/>
</dbReference>
<dbReference type="FunFam" id="1.10.1200.240:FF:000003">
    <property type="entry name" value="50S ribosomal protein L19e"/>
    <property type="match status" value="1"/>
</dbReference>
<dbReference type="FunFam" id="1.10.1650.10:FF:000001">
    <property type="entry name" value="Ribosomal protein L19"/>
    <property type="match status" value="1"/>
</dbReference>
<dbReference type="Gene3D" id="1.10.1200.240">
    <property type="match status" value="1"/>
</dbReference>
<dbReference type="Gene3D" id="1.10.1650.10">
    <property type="match status" value="1"/>
</dbReference>
<dbReference type="HAMAP" id="MF_01475">
    <property type="entry name" value="Ribosomal_eL19"/>
    <property type="match status" value="1"/>
</dbReference>
<dbReference type="InterPro" id="IPR035970">
    <property type="entry name" value="60S_ribosomal_eL19_sf"/>
</dbReference>
<dbReference type="InterPro" id="IPR039547">
    <property type="entry name" value="Ribosomal_eL19"/>
</dbReference>
<dbReference type="InterPro" id="IPR023638">
    <property type="entry name" value="Ribosomal_eL19_CS"/>
</dbReference>
<dbReference type="InterPro" id="IPR000196">
    <property type="entry name" value="Ribosomal_eL19_dom"/>
</dbReference>
<dbReference type="InterPro" id="IPR015972">
    <property type="entry name" value="Ribosomal_eL19_dom1"/>
</dbReference>
<dbReference type="NCBIfam" id="NF006343">
    <property type="entry name" value="PRK08570.1"/>
    <property type="match status" value="1"/>
</dbReference>
<dbReference type="PANTHER" id="PTHR10722">
    <property type="entry name" value="60S RIBOSOMAL PROTEIN L19"/>
    <property type="match status" value="1"/>
</dbReference>
<dbReference type="Pfam" id="PF01280">
    <property type="entry name" value="Ribosomal_L19e"/>
    <property type="match status" value="1"/>
</dbReference>
<dbReference type="Pfam" id="PF25476">
    <property type="entry name" value="Ribosomal_L19e_C"/>
    <property type="match status" value="1"/>
</dbReference>
<dbReference type="SMART" id="SM01416">
    <property type="entry name" value="Ribosomal_L19e"/>
    <property type="match status" value="1"/>
</dbReference>
<dbReference type="SUPFAM" id="SSF48140">
    <property type="entry name" value="Ribosomal protein L19 (L19e)"/>
    <property type="match status" value="1"/>
</dbReference>
<dbReference type="PROSITE" id="PS00526">
    <property type="entry name" value="RIBOSOMAL_L19E"/>
    <property type="match status" value="1"/>
</dbReference>
<comment type="function">
    <text evidence="1">Binds to the 23S rRNA.</text>
</comment>
<comment type="subunit">
    <text evidence="1 3">Part of the 50S ribosomal subunit.</text>
</comment>
<comment type="similarity">
    <text evidence="1">Belongs to the eukaryotic ribosomal protein eL19 family.</text>
</comment>
<feature type="chain" id="PRO_0000461763" description="Large ribosomal subunit protein eL19">
    <location>
        <begin position="1"/>
        <end position="150"/>
    </location>
</feature>
<feature type="region of interest" description="Disordered" evidence="2">
    <location>
        <begin position="56"/>
        <end position="89"/>
    </location>
</feature>
<feature type="compositionally biased region" description="Basic residues" evidence="2">
    <location>
        <begin position="71"/>
        <end position="89"/>
    </location>
</feature>
<name>RL19E_THEKO</name>
<gene>
    <name evidence="1" type="primary">rpl19e</name>
    <name evidence="4" type="ordered locus">TK1523</name>
</gene>